<evidence type="ECO:0000255" key="1"/>
<evidence type="ECO:0000255" key="2">
    <source>
        <dbReference type="HAMAP-Rule" id="MF_03021"/>
    </source>
</evidence>
<evidence type="ECO:0000256" key="3">
    <source>
        <dbReference type="SAM" id="MobiDB-lite"/>
    </source>
</evidence>
<sequence length="600" mass="65853">MNSPGGRNDKKKPVTPAAETGPGSPTTPPSTETQVVLAPPSPHKRNLHLFSYPLLAVFSLLRFLAFQLGLLFVWCCELLSRSVMADKGRTVASTAAAQDRPQEPEVVRSYHQQAFQYISLALRVDEEEKDQKEQAVQWYKKGIEELEKGIAVPISGKGEQYDRARRLQAKMSTNLIMAKDRLQLLAKLQADIQGPHSQMEVCSDNTNLPCRNGLLKPEKGAVPKKKDPPPITSNSYSRTKAPPKSGSLGNRIPNCTSVPTSARQAGAHTPSNRGATGKNNTRTNKPATPTTAVRKKDMKNLRNVDSNLANLILNEIVDSGPSVKFADIAGQDLAKQALQEIVILPSIRPELFTGLRAPARGLLLFGPPGNGKTMLAKAVAAESNATFFNISAASLTSKYVGEGEKLVRALFSVARELQPSIIFIDEVDSLLCERREGEHDASRRLKTEFLIEFDGVQSGGDDRVLVMGATNRPQELDDAVLRRFTKRVYVALPNEETRLVLLKNLLSKQGNPLSEKELTQLSRLTEGYSGSDITALAKDAALGPIRELKPEQVKNMAASEMRNMKYSDFLGSLKKIKCSVSHSTLESYIRWNQDFGDTTV</sequence>
<proteinExistence type="evidence at transcript level"/>
<organism>
    <name type="scientific">Xenopus laevis</name>
    <name type="common">African clawed frog</name>
    <dbReference type="NCBI Taxonomy" id="8355"/>
    <lineage>
        <taxon>Eukaryota</taxon>
        <taxon>Metazoa</taxon>
        <taxon>Chordata</taxon>
        <taxon>Craniata</taxon>
        <taxon>Vertebrata</taxon>
        <taxon>Euteleostomi</taxon>
        <taxon>Amphibia</taxon>
        <taxon>Batrachia</taxon>
        <taxon>Anura</taxon>
        <taxon>Pipoidea</taxon>
        <taxon>Pipidae</taxon>
        <taxon>Xenopodinae</taxon>
        <taxon>Xenopus</taxon>
        <taxon>Xenopus</taxon>
    </lineage>
</organism>
<protein>
    <recommendedName>
        <fullName evidence="2">Spastin</fullName>
        <ecNumber evidence="2">5.6.1.1</ecNumber>
    </recommendedName>
</protein>
<accession>Q6AZT2</accession>
<gene>
    <name evidence="2" type="primary">spast</name>
    <name evidence="2" type="synonym">spg4</name>
</gene>
<dbReference type="EC" id="5.6.1.1" evidence="2"/>
<dbReference type="EMBL" id="BC077358">
    <property type="protein sequence ID" value="AAH77358.1"/>
    <property type="molecule type" value="mRNA"/>
</dbReference>
<dbReference type="RefSeq" id="NP_001086725.1">
    <property type="nucleotide sequence ID" value="NM_001093256.1"/>
</dbReference>
<dbReference type="SMR" id="Q6AZT2"/>
<dbReference type="DNASU" id="446560"/>
<dbReference type="GeneID" id="446560"/>
<dbReference type="KEGG" id="xla:446560"/>
<dbReference type="AGR" id="Xenbase:XB-GENE-947846"/>
<dbReference type="CTD" id="446560"/>
<dbReference type="Xenbase" id="XB-GENE-947846">
    <property type="gene designation" value="spast.S"/>
</dbReference>
<dbReference type="OrthoDB" id="10251136at2759"/>
<dbReference type="Proteomes" id="UP000186698">
    <property type="component" value="Chromosome 5S"/>
</dbReference>
<dbReference type="Bgee" id="446560">
    <property type="expression patterns" value="Expressed in muscle tissue and 19 other cell types or tissues"/>
</dbReference>
<dbReference type="GO" id="GO:1904115">
    <property type="term" value="C:axon cytoplasm"/>
    <property type="evidence" value="ECO:0007669"/>
    <property type="project" value="GOC"/>
</dbReference>
<dbReference type="GO" id="GO:0005813">
    <property type="term" value="C:centrosome"/>
    <property type="evidence" value="ECO:0007669"/>
    <property type="project" value="UniProtKB-SubCell"/>
</dbReference>
<dbReference type="GO" id="GO:0005874">
    <property type="term" value="C:microtubule"/>
    <property type="evidence" value="ECO:0007669"/>
    <property type="project" value="UniProtKB-UniRule"/>
</dbReference>
<dbReference type="GO" id="GO:0015630">
    <property type="term" value="C:microtubule cytoskeleton"/>
    <property type="evidence" value="ECO:0000318"/>
    <property type="project" value="GO_Central"/>
</dbReference>
<dbReference type="GO" id="GO:0030496">
    <property type="term" value="C:midbody"/>
    <property type="evidence" value="ECO:0000250"/>
    <property type="project" value="UniProtKB"/>
</dbReference>
<dbReference type="GO" id="GO:0031965">
    <property type="term" value="C:nuclear membrane"/>
    <property type="evidence" value="ECO:0000250"/>
    <property type="project" value="UniProtKB"/>
</dbReference>
<dbReference type="GO" id="GO:0005634">
    <property type="term" value="C:nucleus"/>
    <property type="evidence" value="ECO:0000250"/>
    <property type="project" value="UniProtKB"/>
</dbReference>
<dbReference type="GO" id="GO:0048471">
    <property type="term" value="C:perinuclear region of cytoplasm"/>
    <property type="evidence" value="ECO:0007669"/>
    <property type="project" value="UniProtKB-SubCell"/>
</dbReference>
<dbReference type="GO" id="GO:0005819">
    <property type="term" value="C:spindle"/>
    <property type="evidence" value="ECO:0007669"/>
    <property type="project" value="UniProtKB-UniRule"/>
</dbReference>
<dbReference type="GO" id="GO:0043014">
    <property type="term" value="F:alpha-tubulin binding"/>
    <property type="evidence" value="ECO:0000250"/>
    <property type="project" value="UniProtKB"/>
</dbReference>
<dbReference type="GO" id="GO:0005524">
    <property type="term" value="F:ATP binding"/>
    <property type="evidence" value="ECO:0007669"/>
    <property type="project" value="UniProtKB-UniRule"/>
</dbReference>
<dbReference type="GO" id="GO:0016887">
    <property type="term" value="F:ATP hydrolysis activity"/>
    <property type="evidence" value="ECO:0000318"/>
    <property type="project" value="GO_Central"/>
</dbReference>
<dbReference type="GO" id="GO:0048487">
    <property type="term" value="F:beta-tubulin binding"/>
    <property type="evidence" value="ECO:0000250"/>
    <property type="project" value="UniProtKB"/>
</dbReference>
<dbReference type="GO" id="GO:0008017">
    <property type="term" value="F:microtubule binding"/>
    <property type="evidence" value="ECO:0000250"/>
    <property type="project" value="UniProtKB"/>
</dbReference>
<dbReference type="GO" id="GO:0008568">
    <property type="term" value="F:microtubule severing ATPase activity"/>
    <property type="evidence" value="ECO:0000250"/>
    <property type="project" value="UniProtKB"/>
</dbReference>
<dbReference type="GO" id="GO:0008089">
    <property type="term" value="P:anterograde axonal transport"/>
    <property type="evidence" value="ECO:0000250"/>
    <property type="project" value="UniProtKB"/>
</dbReference>
<dbReference type="GO" id="GO:0019896">
    <property type="term" value="P:axonal transport of mitochondrion"/>
    <property type="evidence" value="ECO:0000250"/>
    <property type="project" value="UniProtKB"/>
</dbReference>
<dbReference type="GO" id="GO:0007409">
    <property type="term" value="P:axonogenesis"/>
    <property type="evidence" value="ECO:0007669"/>
    <property type="project" value="UniProtKB-UniRule"/>
</dbReference>
<dbReference type="GO" id="GO:0032506">
    <property type="term" value="P:cytokinetic process"/>
    <property type="evidence" value="ECO:0007669"/>
    <property type="project" value="UniProtKB-UniRule"/>
</dbReference>
<dbReference type="GO" id="GO:0006888">
    <property type="term" value="P:endoplasmic reticulum to Golgi vesicle-mediated transport"/>
    <property type="evidence" value="ECO:0007669"/>
    <property type="project" value="UniProtKB-UniRule"/>
</dbReference>
<dbReference type="GO" id="GO:0010458">
    <property type="term" value="P:exit from mitosis"/>
    <property type="evidence" value="ECO:0000250"/>
    <property type="project" value="UniProtKB"/>
</dbReference>
<dbReference type="GO" id="GO:0090148">
    <property type="term" value="P:membrane fission"/>
    <property type="evidence" value="ECO:0000250"/>
    <property type="project" value="UniProtKB"/>
</dbReference>
<dbReference type="GO" id="GO:0001578">
    <property type="term" value="P:microtubule bundle formation"/>
    <property type="evidence" value="ECO:0000250"/>
    <property type="project" value="UniProtKB"/>
</dbReference>
<dbReference type="GO" id="GO:0051013">
    <property type="term" value="P:microtubule severing"/>
    <property type="evidence" value="ECO:0000250"/>
    <property type="project" value="UniProtKB"/>
</dbReference>
<dbReference type="GO" id="GO:0000281">
    <property type="term" value="P:mitotic cytokinesis"/>
    <property type="evidence" value="ECO:0000250"/>
    <property type="project" value="UniProtKB"/>
</dbReference>
<dbReference type="GO" id="GO:0051228">
    <property type="term" value="P:mitotic spindle disassembly"/>
    <property type="evidence" value="ECO:0000250"/>
    <property type="project" value="UniProtKB"/>
</dbReference>
<dbReference type="GO" id="GO:0031468">
    <property type="term" value="P:nuclear membrane reassembly"/>
    <property type="evidence" value="ECO:0000250"/>
    <property type="project" value="UniProtKB"/>
</dbReference>
<dbReference type="GO" id="GO:0031117">
    <property type="term" value="P:positive regulation of microtubule depolymerization"/>
    <property type="evidence" value="ECO:0007669"/>
    <property type="project" value="UniProtKB-UniRule"/>
</dbReference>
<dbReference type="GO" id="GO:0034214">
    <property type="term" value="P:protein hexamerization"/>
    <property type="evidence" value="ECO:0000250"/>
    <property type="project" value="UniProtKB"/>
</dbReference>
<dbReference type="GO" id="GO:0051260">
    <property type="term" value="P:protein homooligomerization"/>
    <property type="evidence" value="ECO:0000250"/>
    <property type="project" value="UniProtKB"/>
</dbReference>
<dbReference type="CDD" id="cd02679">
    <property type="entry name" value="MIT_spastin"/>
    <property type="match status" value="1"/>
</dbReference>
<dbReference type="CDD" id="cd19524">
    <property type="entry name" value="RecA-like_spastin"/>
    <property type="match status" value="1"/>
</dbReference>
<dbReference type="FunFam" id="3.40.50.300:FF:000093">
    <property type="entry name" value="Fidgetin-like 1"/>
    <property type="match status" value="1"/>
</dbReference>
<dbReference type="FunFam" id="1.10.8.60:FF:000036">
    <property type="entry name" value="Spastin"/>
    <property type="match status" value="1"/>
</dbReference>
<dbReference type="FunFam" id="1.20.58.80:FF:000006">
    <property type="entry name" value="Spastin"/>
    <property type="match status" value="1"/>
</dbReference>
<dbReference type="Gene3D" id="1.10.8.60">
    <property type="match status" value="1"/>
</dbReference>
<dbReference type="Gene3D" id="3.40.50.300">
    <property type="entry name" value="P-loop containing nucleotide triphosphate hydrolases"/>
    <property type="match status" value="1"/>
</dbReference>
<dbReference type="Gene3D" id="1.20.58.80">
    <property type="entry name" value="Phosphotransferase system, lactose/cellobiose-type IIA subunit"/>
    <property type="match status" value="1"/>
</dbReference>
<dbReference type="HAMAP" id="MF_03021">
    <property type="entry name" value="Spastin"/>
    <property type="match status" value="1"/>
</dbReference>
<dbReference type="InterPro" id="IPR003593">
    <property type="entry name" value="AAA+_ATPase"/>
</dbReference>
<dbReference type="InterPro" id="IPR041569">
    <property type="entry name" value="AAA_lid_3"/>
</dbReference>
<dbReference type="InterPro" id="IPR003959">
    <property type="entry name" value="ATPase_AAA_core"/>
</dbReference>
<dbReference type="InterPro" id="IPR003960">
    <property type="entry name" value="ATPase_AAA_CS"/>
</dbReference>
<dbReference type="InterPro" id="IPR007330">
    <property type="entry name" value="MIT_dom"/>
</dbReference>
<dbReference type="InterPro" id="IPR050304">
    <property type="entry name" value="MT-severing_AAA_ATPase"/>
</dbReference>
<dbReference type="InterPro" id="IPR027417">
    <property type="entry name" value="P-loop_NTPase"/>
</dbReference>
<dbReference type="InterPro" id="IPR015415">
    <property type="entry name" value="Spast_Vps4_C"/>
</dbReference>
<dbReference type="InterPro" id="IPR017179">
    <property type="entry name" value="Spastin"/>
</dbReference>
<dbReference type="InterPro" id="IPR035106">
    <property type="entry name" value="Spastin_chordate"/>
</dbReference>
<dbReference type="PANTHER" id="PTHR23074">
    <property type="entry name" value="AAA DOMAIN-CONTAINING"/>
    <property type="match status" value="1"/>
</dbReference>
<dbReference type="PANTHER" id="PTHR23074:SF86">
    <property type="entry name" value="SPASTIN"/>
    <property type="match status" value="1"/>
</dbReference>
<dbReference type="Pfam" id="PF00004">
    <property type="entry name" value="AAA"/>
    <property type="match status" value="1"/>
</dbReference>
<dbReference type="Pfam" id="PF17862">
    <property type="entry name" value="AAA_lid_3"/>
    <property type="match status" value="1"/>
</dbReference>
<dbReference type="Pfam" id="PF09336">
    <property type="entry name" value="Vps4_C"/>
    <property type="match status" value="1"/>
</dbReference>
<dbReference type="PIRSF" id="PIRSF037338">
    <property type="entry name" value="Spastin"/>
    <property type="match status" value="1"/>
</dbReference>
<dbReference type="SMART" id="SM00382">
    <property type="entry name" value="AAA"/>
    <property type="match status" value="1"/>
</dbReference>
<dbReference type="SMART" id="SM00745">
    <property type="entry name" value="MIT"/>
    <property type="match status" value="1"/>
</dbReference>
<dbReference type="SUPFAM" id="SSF52540">
    <property type="entry name" value="P-loop containing nucleoside triphosphate hydrolases"/>
    <property type="match status" value="1"/>
</dbReference>
<dbReference type="PROSITE" id="PS00674">
    <property type="entry name" value="AAA"/>
    <property type="match status" value="1"/>
</dbReference>
<comment type="function">
    <text evidence="2">ATP-dependent microtubule severing protein that specifically recognizes and cuts microtubules that are polyglutamylated. Preferentially recognizes and acts on microtubules decorated with short polyglutamate tails: severing activity increases as the number of glutamates per tubulin rises from one to eight, but decreases beyond this glutamylation threshold. Microtubule severing promotes reorganization of cellular microtubule arrays and the release of microtubules from the centrosome following nucleation. Required for membrane traffic from the endoplasmic reticulum (ER) to the Golgi and for completion of the abscission stage of cytokinesis. Also plays a role in axon growth and the formation of axonal branches.</text>
</comment>
<comment type="catalytic activity">
    <reaction evidence="2">
        <text>n ATP + n H2O + a microtubule = n ADP + n phosphate + (n+1) alpha/beta tubulin heterodimers.</text>
        <dbReference type="EC" id="5.6.1.1"/>
    </reaction>
</comment>
<comment type="subunit">
    <text evidence="2">Homohexamer. The homohexamer is stabilized by ATP-binding. The homohexamer may adopt a ring conformation through which microtubules pass prior to being severed. Interacts with microtubules.</text>
</comment>
<comment type="subcellular location">
    <subcellularLocation>
        <location evidence="2">Membrane</location>
        <topology evidence="2">Peripheral membrane protein</topology>
    </subcellularLocation>
    <subcellularLocation>
        <location evidence="2">Cytoplasm</location>
        <location evidence="2">Cytoskeleton</location>
        <location evidence="2">Microtubule organizing center</location>
        <location evidence="2">Centrosome</location>
    </subcellularLocation>
    <subcellularLocation>
        <location evidence="2">Cytoplasm</location>
        <location evidence="2">Cytoskeleton</location>
    </subcellularLocation>
    <subcellularLocation>
        <location evidence="2">Cytoplasm</location>
        <location evidence="2">Perinuclear region</location>
    </subcellularLocation>
    <subcellularLocation>
        <location evidence="2">Nucleus</location>
    </subcellularLocation>
    <text evidence="2">Forms an intramembrane hairpin-like structure in the membrane.</text>
</comment>
<comment type="similarity">
    <text evidence="2">Belongs to the AAA ATPase family. Spastin subfamily.</text>
</comment>
<name>SPAST_XENLA</name>
<feature type="chain" id="PRO_0000367138" description="Spastin">
    <location>
        <begin position="1"/>
        <end position="600"/>
    </location>
</feature>
<feature type="topological domain" description="Cytoplasmic" evidence="2">
    <location>
        <begin position="1"/>
        <end position="53"/>
    </location>
</feature>
<feature type="intramembrane region" description="Helical" evidence="2">
    <location>
        <begin position="54"/>
        <end position="74"/>
    </location>
</feature>
<feature type="topological domain" description="Cytoplasmic" evidence="2">
    <location>
        <begin position="75"/>
        <end position="600"/>
    </location>
</feature>
<feature type="domain" description="MIT" evidence="1">
    <location>
        <begin position="110"/>
        <end position="185"/>
    </location>
</feature>
<feature type="region of interest" description="Disordered" evidence="3">
    <location>
        <begin position="1"/>
        <end position="39"/>
    </location>
</feature>
<feature type="region of interest" description="Disordered" evidence="3">
    <location>
        <begin position="213"/>
        <end position="294"/>
    </location>
</feature>
<feature type="compositionally biased region" description="Low complexity" evidence="3">
    <location>
        <begin position="15"/>
        <end position="33"/>
    </location>
</feature>
<feature type="compositionally biased region" description="Basic and acidic residues" evidence="3">
    <location>
        <begin position="216"/>
        <end position="228"/>
    </location>
</feature>
<feature type="compositionally biased region" description="Polar residues" evidence="3">
    <location>
        <begin position="253"/>
        <end position="291"/>
    </location>
</feature>
<feature type="binding site" evidence="2">
    <location>
        <begin position="366"/>
        <end position="373"/>
    </location>
    <ligand>
        <name>ATP</name>
        <dbReference type="ChEBI" id="CHEBI:30616"/>
    </ligand>
</feature>
<keyword id="KW-0067">ATP-binding</keyword>
<keyword id="KW-0131">Cell cycle</keyword>
<keyword id="KW-0132">Cell division</keyword>
<keyword id="KW-0963">Cytoplasm</keyword>
<keyword id="KW-0206">Cytoskeleton</keyword>
<keyword id="KW-0217">Developmental protein</keyword>
<keyword id="KW-0221">Differentiation</keyword>
<keyword id="KW-0413">Isomerase</keyword>
<keyword id="KW-0472">Membrane</keyword>
<keyword id="KW-0493">Microtubule</keyword>
<keyword id="KW-0524">Neurogenesis</keyword>
<keyword id="KW-0547">Nucleotide-binding</keyword>
<keyword id="KW-0539">Nucleus</keyword>
<keyword id="KW-1185">Reference proteome</keyword>
<reference key="1">
    <citation type="submission" date="2004-07" db="EMBL/GenBank/DDBJ databases">
        <authorList>
            <consortium name="NIH - Xenopus Gene Collection (XGC) project"/>
        </authorList>
    </citation>
    <scope>NUCLEOTIDE SEQUENCE [LARGE SCALE MRNA]</scope>
    <source>
        <tissue>Embryo</tissue>
    </source>
</reference>